<proteinExistence type="evidence at protein level"/>
<organism>
    <name type="scientific">Drosophila melanogaster</name>
    <name type="common">Fruit fly</name>
    <dbReference type="NCBI Taxonomy" id="7227"/>
    <lineage>
        <taxon>Eukaryota</taxon>
        <taxon>Metazoa</taxon>
        <taxon>Ecdysozoa</taxon>
        <taxon>Arthropoda</taxon>
        <taxon>Hexapoda</taxon>
        <taxon>Insecta</taxon>
        <taxon>Pterygota</taxon>
        <taxon>Neoptera</taxon>
        <taxon>Endopterygota</taxon>
        <taxon>Diptera</taxon>
        <taxon>Brachycera</taxon>
        <taxon>Muscomorpha</taxon>
        <taxon>Ephydroidea</taxon>
        <taxon>Drosophilidae</taxon>
        <taxon>Drosophila</taxon>
        <taxon>Sophophora</taxon>
    </lineage>
</organism>
<keyword id="KW-0507">mRNA processing</keyword>
<keyword id="KW-0539">Nucleus</keyword>
<keyword id="KW-0597">Phosphoprotein</keyword>
<keyword id="KW-1185">Reference proteome</keyword>
<keyword id="KW-0694">RNA-binding</keyword>
<dbReference type="EMBL" id="AE014297">
    <property type="protein sequence ID" value="AAF56844.1"/>
    <property type="molecule type" value="Genomic_DNA"/>
</dbReference>
<dbReference type="EMBL" id="AF160933">
    <property type="protein sequence ID" value="AAD46873.1"/>
    <property type="molecule type" value="mRNA"/>
</dbReference>
<dbReference type="RefSeq" id="NP_651658.1">
    <property type="nucleotide sequence ID" value="NM_143401.3"/>
</dbReference>
<dbReference type="SMR" id="Q9V3D6"/>
<dbReference type="BioGRID" id="68297">
    <property type="interactions" value="11"/>
</dbReference>
<dbReference type="ComplexPortal" id="CPX-2768">
    <property type="entry name" value="Histone pre-RNA core cleavage complex"/>
</dbReference>
<dbReference type="FunCoup" id="Q9V3D6">
    <property type="interactions" value="2487"/>
</dbReference>
<dbReference type="IntAct" id="Q9V3D6">
    <property type="interactions" value="5"/>
</dbReference>
<dbReference type="MINT" id="Q9V3D6"/>
<dbReference type="STRING" id="7227.FBpp0084726"/>
<dbReference type="iPTMnet" id="Q9V3D6"/>
<dbReference type="PaxDb" id="7227-FBpp0084726"/>
<dbReference type="DNASU" id="43426"/>
<dbReference type="EnsemblMetazoa" id="FBtr0085357">
    <property type="protein sequence ID" value="FBpp0084726"/>
    <property type="gene ID" value="FBgn0027873"/>
</dbReference>
<dbReference type="GeneID" id="43426"/>
<dbReference type="KEGG" id="dme:Dmel_CG1957"/>
<dbReference type="UCSC" id="CG1957-RA">
    <property type="organism name" value="d. melanogaster"/>
</dbReference>
<dbReference type="AGR" id="FB:FBgn0027873"/>
<dbReference type="CTD" id="43426"/>
<dbReference type="FlyBase" id="FBgn0027873">
    <property type="gene designation" value="Cpsf100"/>
</dbReference>
<dbReference type="VEuPathDB" id="VectorBase:FBgn0027873"/>
<dbReference type="eggNOG" id="KOG1135">
    <property type="taxonomic scope" value="Eukaryota"/>
</dbReference>
<dbReference type="GeneTree" id="ENSGT00910000144260"/>
<dbReference type="HOGENOM" id="CLU_002227_1_1_1"/>
<dbReference type="InParanoid" id="Q9V3D6"/>
<dbReference type="OMA" id="QSRHNME"/>
<dbReference type="OrthoDB" id="64353at2759"/>
<dbReference type="PhylomeDB" id="Q9V3D6"/>
<dbReference type="Reactome" id="R-DME-159231">
    <property type="pathway name" value="Transport of Mature mRNA Derived from an Intronless Transcript"/>
</dbReference>
<dbReference type="Reactome" id="R-DME-72187">
    <property type="pathway name" value="mRNA 3'-end processing"/>
</dbReference>
<dbReference type="Reactome" id="R-DME-72203">
    <property type="pathway name" value="Processing of Capped Intron-Containing Pre-mRNA"/>
</dbReference>
<dbReference type="Reactome" id="R-DME-73856">
    <property type="pathway name" value="RNA Polymerase II Transcription Termination"/>
</dbReference>
<dbReference type="Reactome" id="R-DME-77595">
    <property type="pathway name" value="Processing of Intronless Pre-mRNAs"/>
</dbReference>
<dbReference type="SignaLink" id="Q9V3D6"/>
<dbReference type="BioGRID-ORCS" id="43426">
    <property type="hits" value="0 hits in 1 CRISPR screen"/>
</dbReference>
<dbReference type="GenomeRNAi" id="43426"/>
<dbReference type="PRO" id="PR:Q9V3D6"/>
<dbReference type="Proteomes" id="UP000000803">
    <property type="component" value="Chromosome 3R"/>
</dbReference>
<dbReference type="Bgee" id="FBgn0027873">
    <property type="expression patterns" value="Expressed in embryonic/larval hemocyte (Drosophila) and 60 other cell types or tissues"/>
</dbReference>
<dbReference type="GO" id="GO:0005847">
    <property type="term" value="C:mRNA cleavage and polyadenylation specificity factor complex"/>
    <property type="evidence" value="ECO:0000314"/>
    <property type="project" value="FlyBase"/>
</dbReference>
<dbReference type="GO" id="GO:0003723">
    <property type="term" value="F:RNA binding"/>
    <property type="evidence" value="ECO:0000318"/>
    <property type="project" value="GO_Central"/>
</dbReference>
<dbReference type="GO" id="GO:0180010">
    <property type="term" value="P:co-transcriptional mRNA 3'-end processing, cleavage and polyadenylation pathway"/>
    <property type="evidence" value="ECO:0000315"/>
    <property type="project" value="FlyBase"/>
</dbReference>
<dbReference type="GO" id="GO:0006398">
    <property type="term" value="P:mRNA 3'-end processing by stem-loop binding and cleavage"/>
    <property type="evidence" value="ECO:0000315"/>
    <property type="project" value="FlyBase"/>
</dbReference>
<dbReference type="CDD" id="cd16293">
    <property type="entry name" value="CPSF2-like_MBL-fold"/>
    <property type="match status" value="1"/>
</dbReference>
<dbReference type="FunFam" id="3.60.15.10:FF:000008">
    <property type="entry name" value="Cleavage and polyadenylation specificity factor subunit 2"/>
    <property type="match status" value="1"/>
</dbReference>
<dbReference type="Gene3D" id="3.60.15.10">
    <property type="entry name" value="Ribonuclease Z/Hydroxyacylglutathione hydrolase-like"/>
    <property type="match status" value="1"/>
</dbReference>
<dbReference type="InterPro" id="IPR022712">
    <property type="entry name" value="Beta_Casp"/>
</dbReference>
<dbReference type="InterPro" id="IPR027075">
    <property type="entry name" value="CPSF2"/>
</dbReference>
<dbReference type="InterPro" id="IPR025069">
    <property type="entry name" value="Cpsf2_C"/>
</dbReference>
<dbReference type="InterPro" id="IPR035639">
    <property type="entry name" value="CPSF2_MBL"/>
</dbReference>
<dbReference type="InterPro" id="IPR001279">
    <property type="entry name" value="Metallo-B-lactamas"/>
</dbReference>
<dbReference type="InterPro" id="IPR036866">
    <property type="entry name" value="RibonucZ/Hydroxyglut_hydro"/>
</dbReference>
<dbReference type="InterPro" id="IPR011108">
    <property type="entry name" value="RMMBL"/>
</dbReference>
<dbReference type="PANTHER" id="PTHR45922">
    <property type="entry name" value="CLEAVAGE AND POLYADENYLATION SPECIFICITY FACTOR SUBUNIT 2"/>
    <property type="match status" value="1"/>
</dbReference>
<dbReference type="PANTHER" id="PTHR45922:SF1">
    <property type="entry name" value="CLEAVAGE AND POLYADENYLATION SPECIFICITY FACTOR SUBUNIT 2"/>
    <property type="match status" value="1"/>
</dbReference>
<dbReference type="Pfam" id="PF10996">
    <property type="entry name" value="Beta-Casp"/>
    <property type="match status" value="1"/>
</dbReference>
<dbReference type="Pfam" id="PF13299">
    <property type="entry name" value="CPSF100_C"/>
    <property type="match status" value="1"/>
</dbReference>
<dbReference type="Pfam" id="PF16661">
    <property type="entry name" value="Lactamase_B_6"/>
    <property type="match status" value="1"/>
</dbReference>
<dbReference type="Pfam" id="PF07521">
    <property type="entry name" value="RMMBL"/>
    <property type="match status" value="1"/>
</dbReference>
<dbReference type="SMART" id="SM01027">
    <property type="entry name" value="Beta-Casp"/>
    <property type="match status" value="1"/>
</dbReference>
<dbReference type="SMART" id="SM00849">
    <property type="entry name" value="Lactamase_B"/>
    <property type="match status" value="1"/>
</dbReference>
<dbReference type="SUPFAM" id="SSF56281">
    <property type="entry name" value="Metallo-hydrolase/oxidoreductase"/>
    <property type="match status" value="1"/>
</dbReference>
<protein>
    <recommendedName>
        <fullName>Probable cleavage and polyadenylation specificity factor subunit 2</fullName>
    </recommendedName>
    <alternativeName>
        <fullName>Cleavage and polyadenylation specificity factor 100 kDa subunit</fullName>
        <shortName>CPSF 100 kDa subunit</shortName>
    </alternativeName>
</protein>
<sequence length="756" mass="85418">MTSIIKLHTISGAMDESPPCYILQIDDVRILLDCGWDEKFDANFIKELKRQVHTLDAVLLSHPDAYHLGALPYLVGKLGLNCPIYATIPVFKMGQMFMYDLYMSHFNMGDFDLFSLDDVDTAFEKITQLKYNQTVSLKDKGYGISITPLNAGHMIGGTIWKIVKVGEEDIVYATDFNHKKERHLSGCELDRLQRPSLLITDAYNAQYQQARRRARDEKLMTNILQTVRNNGNVLIAVDTAGRVLELAHMLDQLWKNKESGLMAYSLALLNNVSYNVIEFAKSQIEWMSDKLTKAFEGARNNPFQFKHIQLCHSLADVYKLPAGPKVVLASTPDLESGFTRDLFVQWASNANNSIILTTRTSPGTLAMELVENCAPGKQIELDVRRRVDLEGAELEEYLRTQGEKLNPLIVKPDVEEESSSESEDDIEMSVITGKHDIVVRPEGRHHSGFFKSNKRHHVMFPYHEEKVKCDEYGEIINLDDYRIADATGYEFVPMEEQNKENVKKEEPGIGAEQQANGGIVDNDVQLLEKPTKLISQRKTIEVNAQVQRIDFEGRSDGESMLKILSQLRPRRVIVIHGTAEGTQVVARHCEQNVGARVFTPQKGEIIDVTSEIHIYQVRLTEGLVSQLQFQKGKDAEVAWVDGRLGMRVKAIEAPMDVTVEQDASVQEGKTLTLETLADDEIPIHNSVLINELKLSDFKQTLMRNNINSEFSGGVLWCSNGTLALRRVDAGKVAMEGCLSEEYYKIRELLYEQYAIV</sequence>
<evidence type="ECO:0000269" key="1">
    <source>
    </source>
</evidence>
<evidence type="ECO:0000269" key="2">
    <source>
    </source>
</evidence>
<evidence type="ECO:0000305" key="3"/>
<feature type="chain" id="PRO_0000074397" description="Probable cleavage and polyadenylation specificity factor subunit 2">
    <location>
        <begin position="1"/>
        <end position="756"/>
    </location>
</feature>
<feature type="modified residue" description="Phosphothreonine" evidence="1">
    <location>
        <position position="221"/>
    </location>
</feature>
<feature type="modified residue" description="Phosphothreonine" evidence="1">
    <location>
        <position position="226"/>
    </location>
</feature>
<reference key="1">
    <citation type="journal article" date="2000" name="Science">
        <title>The genome sequence of Drosophila melanogaster.</title>
        <authorList>
            <person name="Adams M.D."/>
            <person name="Celniker S.E."/>
            <person name="Holt R.A."/>
            <person name="Evans C.A."/>
            <person name="Gocayne J.D."/>
            <person name="Amanatides P.G."/>
            <person name="Scherer S.E."/>
            <person name="Li P.W."/>
            <person name="Hoskins R.A."/>
            <person name="Galle R.F."/>
            <person name="George R.A."/>
            <person name="Lewis S.E."/>
            <person name="Richards S."/>
            <person name="Ashburner M."/>
            <person name="Henderson S.N."/>
            <person name="Sutton G.G."/>
            <person name="Wortman J.R."/>
            <person name="Yandell M.D."/>
            <person name="Zhang Q."/>
            <person name="Chen L.X."/>
            <person name="Brandon R.C."/>
            <person name="Rogers Y.-H.C."/>
            <person name="Blazej R.G."/>
            <person name="Champe M."/>
            <person name="Pfeiffer B.D."/>
            <person name="Wan K.H."/>
            <person name="Doyle C."/>
            <person name="Baxter E.G."/>
            <person name="Helt G."/>
            <person name="Nelson C.R."/>
            <person name="Miklos G.L.G."/>
            <person name="Abril J.F."/>
            <person name="Agbayani A."/>
            <person name="An H.-J."/>
            <person name="Andrews-Pfannkoch C."/>
            <person name="Baldwin D."/>
            <person name="Ballew R.M."/>
            <person name="Basu A."/>
            <person name="Baxendale J."/>
            <person name="Bayraktaroglu L."/>
            <person name="Beasley E.M."/>
            <person name="Beeson K.Y."/>
            <person name="Benos P.V."/>
            <person name="Berman B.P."/>
            <person name="Bhandari D."/>
            <person name="Bolshakov S."/>
            <person name="Borkova D."/>
            <person name="Botchan M.R."/>
            <person name="Bouck J."/>
            <person name="Brokstein P."/>
            <person name="Brottier P."/>
            <person name="Burtis K.C."/>
            <person name="Busam D.A."/>
            <person name="Butler H."/>
            <person name="Cadieu E."/>
            <person name="Center A."/>
            <person name="Chandra I."/>
            <person name="Cherry J.M."/>
            <person name="Cawley S."/>
            <person name="Dahlke C."/>
            <person name="Davenport L.B."/>
            <person name="Davies P."/>
            <person name="de Pablos B."/>
            <person name="Delcher A."/>
            <person name="Deng Z."/>
            <person name="Mays A.D."/>
            <person name="Dew I."/>
            <person name="Dietz S.M."/>
            <person name="Dodson K."/>
            <person name="Doup L.E."/>
            <person name="Downes M."/>
            <person name="Dugan-Rocha S."/>
            <person name="Dunkov B.C."/>
            <person name="Dunn P."/>
            <person name="Durbin K.J."/>
            <person name="Evangelista C.C."/>
            <person name="Ferraz C."/>
            <person name="Ferriera S."/>
            <person name="Fleischmann W."/>
            <person name="Fosler C."/>
            <person name="Gabrielian A.E."/>
            <person name="Garg N.S."/>
            <person name="Gelbart W.M."/>
            <person name="Glasser K."/>
            <person name="Glodek A."/>
            <person name="Gong F."/>
            <person name="Gorrell J.H."/>
            <person name="Gu Z."/>
            <person name="Guan P."/>
            <person name="Harris M."/>
            <person name="Harris N.L."/>
            <person name="Harvey D.A."/>
            <person name="Heiman T.J."/>
            <person name="Hernandez J.R."/>
            <person name="Houck J."/>
            <person name="Hostin D."/>
            <person name="Houston K.A."/>
            <person name="Howland T.J."/>
            <person name="Wei M.-H."/>
            <person name="Ibegwam C."/>
            <person name="Jalali M."/>
            <person name="Kalush F."/>
            <person name="Karpen G.H."/>
            <person name="Ke Z."/>
            <person name="Kennison J.A."/>
            <person name="Ketchum K.A."/>
            <person name="Kimmel B.E."/>
            <person name="Kodira C.D."/>
            <person name="Kraft C.L."/>
            <person name="Kravitz S."/>
            <person name="Kulp D."/>
            <person name="Lai Z."/>
            <person name="Lasko P."/>
            <person name="Lei Y."/>
            <person name="Levitsky A.A."/>
            <person name="Li J.H."/>
            <person name="Li Z."/>
            <person name="Liang Y."/>
            <person name="Lin X."/>
            <person name="Liu X."/>
            <person name="Mattei B."/>
            <person name="McIntosh T.C."/>
            <person name="McLeod M.P."/>
            <person name="McPherson D."/>
            <person name="Merkulov G."/>
            <person name="Milshina N.V."/>
            <person name="Mobarry C."/>
            <person name="Morris J."/>
            <person name="Moshrefi A."/>
            <person name="Mount S.M."/>
            <person name="Moy M."/>
            <person name="Murphy B."/>
            <person name="Murphy L."/>
            <person name="Muzny D.M."/>
            <person name="Nelson D.L."/>
            <person name="Nelson D.R."/>
            <person name="Nelson K.A."/>
            <person name="Nixon K."/>
            <person name="Nusskern D.R."/>
            <person name="Pacleb J.M."/>
            <person name="Palazzolo M."/>
            <person name="Pittman G.S."/>
            <person name="Pan S."/>
            <person name="Pollard J."/>
            <person name="Puri V."/>
            <person name="Reese M.G."/>
            <person name="Reinert K."/>
            <person name="Remington K."/>
            <person name="Saunders R.D.C."/>
            <person name="Scheeler F."/>
            <person name="Shen H."/>
            <person name="Shue B.C."/>
            <person name="Siden-Kiamos I."/>
            <person name="Simpson M."/>
            <person name="Skupski M.P."/>
            <person name="Smith T.J."/>
            <person name="Spier E."/>
            <person name="Spradling A.C."/>
            <person name="Stapleton M."/>
            <person name="Strong R."/>
            <person name="Sun E."/>
            <person name="Svirskas R."/>
            <person name="Tector C."/>
            <person name="Turner R."/>
            <person name="Venter E."/>
            <person name="Wang A.H."/>
            <person name="Wang X."/>
            <person name="Wang Z.-Y."/>
            <person name="Wassarman D.A."/>
            <person name="Weinstock G.M."/>
            <person name="Weissenbach J."/>
            <person name="Williams S.M."/>
            <person name="Woodage T."/>
            <person name="Worley K.C."/>
            <person name="Wu D."/>
            <person name="Yang S."/>
            <person name="Yao Q.A."/>
            <person name="Ye J."/>
            <person name="Yeh R.-F."/>
            <person name="Zaveri J.S."/>
            <person name="Zhan M."/>
            <person name="Zhang G."/>
            <person name="Zhao Q."/>
            <person name="Zheng L."/>
            <person name="Zheng X.H."/>
            <person name="Zhong F.N."/>
            <person name="Zhong W."/>
            <person name="Zhou X."/>
            <person name="Zhu S.C."/>
            <person name="Zhu X."/>
            <person name="Smith H.O."/>
            <person name="Gibbs R.A."/>
            <person name="Myers E.W."/>
            <person name="Rubin G.M."/>
            <person name="Venter J.C."/>
        </authorList>
    </citation>
    <scope>NUCLEOTIDE SEQUENCE [LARGE SCALE GENOMIC DNA]</scope>
    <source>
        <strain>Berkeley</strain>
    </source>
</reference>
<reference key="2">
    <citation type="journal article" date="2002" name="Genome Biol.">
        <title>Annotation of the Drosophila melanogaster euchromatic genome: a systematic review.</title>
        <authorList>
            <person name="Misra S."/>
            <person name="Crosby M.A."/>
            <person name="Mungall C.J."/>
            <person name="Matthews B.B."/>
            <person name="Campbell K.S."/>
            <person name="Hradecky P."/>
            <person name="Huang Y."/>
            <person name="Kaminker J.S."/>
            <person name="Millburn G.H."/>
            <person name="Prochnik S.E."/>
            <person name="Smith C.D."/>
            <person name="Tupy J.L."/>
            <person name="Whitfield E.J."/>
            <person name="Bayraktaroglu L."/>
            <person name="Berman B.P."/>
            <person name="Bettencourt B.R."/>
            <person name="Celniker S.E."/>
            <person name="de Grey A.D.N.J."/>
            <person name="Drysdale R.A."/>
            <person name="Harris N.L."/>
            <person name="Richter J."/>
            <person name="Russo S."/>
            <person name="Schroeder A.J."/>
            <person name="Shu S.Q."/>
            <person name="Stapleton M."/>
            <person name="Yamada C."/>
            <person name="Ashburner M."/>
            <person name="Gelbart W.M."/>
            <person name="Rubin G.M."/>
            <person name="Lewis S.E."/>
        </authorList>
    </citation>
    <scope>GENOME REANNOTATION</scope>
    <source>
        <strain>Berkeley</strain>
    </source>
</reference>
<reference key="3">
    <citation type="journal article" date="2000" name="Science">
        <title>A Drosophila complementary DNA resource.</title>
        <authorList>
            <person name="Rubin G.M."/>
            <person name="Hong L."/>
            <person name="Brokstein P."/>
            <person name="Evans-Holm M."/>
            <person name="Frise E."/>
            <person name="Stapleton M."/>
            <person name="Harvey D.A."/>
        </authorList>
    </citation>
    <scope>NUCLEOTIDE SEQUENCE [LARGE SCALE MRNA]</scope>
    <source>
        <strain>Berkeley</strain>
        <tissue>Embryo</tissue>
    </source>
</reference>
<reference key="4">
    <citation type="journal article" date="2008" name="J. Proteome Res.">
        <title>Phosphoproteome analysis of Drosophila melanogaster embryos.</title>
        <authorList>
            <person name="Zhai B."/>
            <person name="Villen J."/>
            <person name="Beausoleil S.A."/>
            <person name="Mintseris J."/>
            <person name="Gygi S.P."/>
        </authorList>
    </citation>
    <scope>PHOSPHORYLATION [LARGE SCALE ANALYSIS] AT THR-221 AND THR-226</scope>
    <scope>IDENTIFICATION BY MASS SPECTROMETRY</scope>
    <source>
        <tissue>Embryo</tissue>
    </source>
</reference>
<reference key="5">
    <citation type="journal article" date="2009" name="Mol. Cell">
        <title>A core complex of CPSF73, CPSF100, and Symplekin may form two different cleavage factors for processing of poly(A) and histone mRNAs.</title>
        <authorList>
            <person name="Sullivan K.D."/>
            <person name="Steiniger M."/>
            <person name="Marzluff W.F."/>
        </authorList>
    </citation>
    <scope>FUNCTION</scope>
    <scope>IDENTIFICATION IN THE CPSF COMPLEX</scope>
    <scope>INTERACTION WITH SYM; CPSF73; SLBP AND LSM11</scope>
</reference>
<name>CPSF2_DROME</name>
<gene>
    <name type="primary">Cpsf100</name>
    <name type="ORF">CG1957</name>
</gene>
<comment type="function">
    <text evidence="2">Component of the cleavage and polyadenylation specificity factor (CPSF) complex that plays a key role in pre-mRNA 3'-end formation, recognizing the AAUAAA signal sequence and interacting with poly(A) polymerase and other factors to bring about cleavage and poly(A) addition. Required for the cotranscriptional processing of 3'-ends of polyadenylated and histone pre-mRNA.</text>
</comment>
<comment type="subunit">
    <text evidence="2">Component of the cleavage and polyadenylation specificity factor (CPSF) complex, composed of at least Clp, Cpsf73, Cpsf100 and Cpsf160. Interacts with Sym and Cpsf73 forming a core cleavage factor required for both polyadenylated and histone mRNA processing. Interacts with Slbp and Lsm11.</text>
</comment>
<comment type="subcellular location">
    <subcellularLocation>
        <location evidence="3">Nucleus</location>
    </subcellularLocation>
</comment>
<comment type="similarity">
    <text evidence="3">Belongs to the metallo-beta-lactamase superfamily. RNA-metabolizing metallo-beta-lactamase-like family. CPSF2/YSH1 subfamily.</text>
</comment>
<accession>Q9V3D6</accession>
<accession>Q8IML7</accession>